<feature type="chain" id="PRO_0000265612" description="Transcription antitermination protein NusB">
    <location>
        <begin position="1"/>
        <end position="291"/>
    </location>
</feature>
<proteinExistence type="inferred from homology"/>
<gene>
    <name evidence="1" type="primary">nusB</name>
    <name type="ordered locus">CYB_2099</name>
</gene>
<reference key="1">
    <citation type="journal article" date="2007" name="ISME J.">
        <title>Population level functional diversity in a microbial community revealed by comparative genomic and metagenomic analyses.</title>
        <authorList>
            <person name="Bhaya D."/>
            <person name="Grossman A.R."/>
            <person name="Steunou A.-S."/>
            <person name="Khuri N."/>
            <person name="Cohan F.M."/>
            <person name="Hamamura N."/>
            <person name="Melendrez M.C."/>
            <person name="Bateson M.M."/>
            <person name="Ward D.M."/>
            <person name="Heidelberg J.F."/>
        </authorList>
    </citation>
    <scope>NUCLEOTIDE SEQUENCE [LARGE SCALE GENOMIC DNA]</scope>
    <source>
        <strain>JA-2-3B'a(2-13)</strain>
    </source>
</reference>
<keyword id="KW-1185">Reference proteome</keyword>
<keyword id="KW-0694">RNA-binding</keyword>
<keyword id="KW-0804">Transcription</keyword>
<keyword id="KW-0889">Transcription antitermination</keyword>
<keyword id="KW-0805">Transcription regulation</keyword>
<accession>Q2JHC7</accession>
<comment type="function">
    <text evidence="1">Involved in transcription antitermination. Required for transcription of ribosomal RNA (rRNA) genes. Binds specifically to the boxA antiterminator sequence of the ribosomal RNA (rrn) operons.</text>
</comment>
<comment type="similarity">
    <text evidence="1">Belongs to the NusB family.</text>
</comment>
<dbReference type="EMBL" id="CP000240">
    <property type="protein sequence ID" value="ABD03045.1"/>
    <property type="molecule type" value="Genomic_DNA"/>
</dbReference>
<dbReference type="SMR" id="Q2JHC7"/>
<dbReference type="STRING" id="321332.CYB_2099"/>
<dbReference type="KEGG" id="cyb:CYB_2099"/>
<dbReference type="eggNOG" id="COG0781">
    <property type="taxonomic scope" value="Bacteria"/>
</dbReference>
<dbReference type="HOGENOM" id="CLU_087843_0_0_3"/>
<dbReference type="OrthoDB" id="3528057at2"/>
<dbReference type="Proteomes" id="UP000001938">
    <property type="component" value="Chromosome"/>
</dbReference>
<dbReference type="GO" id="GO:0005829">
    <property type="term" value="C:cytosol"/>
    <property type="evidence" value="ECO:0007669"/>
    <property type="project" value="TreeGrafter"/>
</dbReference>
<dbReference type="GO" id="GO:0003723">
    <property type="term" value="F:RNA binding"/>
    <property type="evidence" value="ECO:0007669"/>
    <property type="project" value="UniProtKB-UniRule"/>
</dbReference>
<dbReference type="GO" id="GO:0006353">
    <property type="term" value="P:DNA-templated transcription termination"/>
    <property type="evidence" value="ECO:0007669"/>
    <property type="project" value="UniProtKB-UniRule"/>
</dbReference>
<dbReference type="GO" id="GO:0031564">
    <property type="term" value="P:transcription antitermination"/>
    <property type="evidence" value="ECO:0007669"/>
    <property type="project" value="UniProtKB-KW"/>
</dbReference>
<dbReference type="Gene3D" id="1.10.940.10">
    <property type="entry name" value="NusB-like"/>
    <property type="match status" value="1"/>
</dbReference>
<dbReference type="HAMAP" id="MF_00073">
    <property type="entry name" value="NusB"/>
    <property type="match status" value="1"/>
</dbReference>
<dbReference type="InterPro" id="IPR035926">
    <property type="entry name" value="NusB-like_sf"/>
</dbReference>
<dbReference type="InterPro" id="IPR011605">
    <property type="entry name" value="NusB_fam"/>
</dbReference>
<dbReference type="InterPro" id="IPR006027">
    <property type="entry name" value="NusB_RsmB_TIM44"/>
</dbReference>
<dbReference type="NCBIfam" id="TIGR01951">
    <property type="entry name" value="nusB"/>
    <property type="match status" value="1"/>
</dbReference>
<dbReference type="PANTHER" id="PTHR11078:SF3">
    <property type="entry name" value="ANTITERMINATION NUSB DOMAIN-CONTAINING PROTEIN"/>
    <property type="match status" value="1"/>
</dbReference>
<dbReference type="PANTHER" id="PTHR11078">
    <property type="entry name" value="N UTILIZATION SUBSTANCE PROTEIN B-RELATED"/>
    <property type="match status" value="1"/>
</dbReference>
<dbReference type="Pfam" id="PF01029">
    <property type="entry name" value="NusB"/>
    <property type="match status" value="1"/>
</dbReference>
<dbReference type="SUPFAM" id="SSF48013">
    <property type="entry name" value="NusB-like"/>
    <property type="match status" value="1"/>
</dbReference>
<protein>
    <recommendedName>
        <fullName evidence="1">Transcription antitermination protein NusB</fullName>
    </recommendedName>
    <alternativeName>
        <fullName evidence="1">Antitermination factor NusB</fullName>
    </alternativeName>
</protein>
<organism>
    <name type="scientific">Synechococcus sp. (strain JA-2-3B'a(2-13))</name>
    <name type="common">Cyanobacteria bacterium Yellowstone B-Prime</name>
    <dbReference type="NCBI Taxonomy" id="321332"/>
    <lineage>
        <taxon>Bacteria</taxon>
        <taxon>Bacillati</taxon>
        <taxon>Cyanobacteriota</taxon>
        <taxon>Cyanophyceae</taxon>
        <taxon>Synechococcales</taxon>
        <taxon>Synechococcaceae</taxon>
        <taxon>Synechococcus</taxon>
    </lineage>
</organism>
<sequence>MQPRRIARELALLGVNQLPATAAKLSEKQLEDLLLAAIRALSEETHETLSTAAAEIQRSDRLLHESDPLLLADSDPKEEGGSRSVTLRLHQAQRHLQRLEITLKEAKVPNPNALRGEVLELIQQVQVALSNAGQALEHLEQRLHSVRHILDEVVQLSQRAVNRVGVALSMPELLYIAQSQEVRAYALQLLTALRTHKEAIDARLQKALVGWQLQRVGRIERDILRLAVVEMEILASSPVKVAINEAVELAKKYGDPEAAAFVNGVLRRVVDSQMETHRGRDPSLPGSGSGG</sequence>
<evidence type="ECO:0000255" key="1">
    <source>
        <dbReference type="HAMAP-Rule" id="MF_00073"/>
    </source>
</evidence>
<name>NUSB_SYNJB</name>